<keyword id="KW-1003">Cell membrane</keyword>
<keyword id="KW-0966">Cell projection</keyword>
<keyword id="KW-1062">Cushing syndrome</keyword>
<keyword id="KW-0225">Disease variant</keyword>
<keyword id="KW-0472">Membrane</keyword>
<keyword id="KW-1267">Proteomics identification</keyword>
<keyword id="KW-1185">Reference proteome</keyword>
<proteinExistence type="evidence at protein level"/>
<accession>P84996</accession>
<accession>A2A2S4</accession>
<organism>
    <name type="scientific">Homo sapiens</name>
    <name type="common">Human</name>
    <dbReference type="NCBI Taxonomy" id="9606"/>
    <lineage>
        <taxon>Eukaryota</taxon>
        <taxon>Metazoa</taxon>
        <taxon>Chordata</taxon>
        <taxon>Craniata</taxon>
        <taxon>Vertebrata</taxon>
        <taxon>Euteleostomi</taxon>
        <taxon>Mammalia</taxon>
        <taxon>Eutheria</taxon>
        <taxon>Euarchontoglires</taxon>
        <taxon>Primates</taxon>
        <taxon>Haplorrhini</taxon>
        <taxon>Catarrhini</taxon>
        <taxon>Hominidae</taxon>
        <taxon>Homo</taxon>
    </lineage>
</organism>
<sequence length="626" mass="67948">MMARPVDPQRSPDPTFRSSTRHSGKLEPMEATAHLLRKQCPSRLNSPAWEASGLHWSSLDSPVGSMQALRPSAQHSWSPEPSVVPDQAWEDTALHQKKLCPLSLTSLPREAAVNFSYRSQTLLQEAQVLQGSPELLPRSPKPSGLQRLAPEEATALPLRRLCHLSLMEKDLGTTAHPRGFPELSHKSTAAASSRQSRPRVRSASLPPRTRLPSGSQAPSAAHPKRLSDLLLTSRAAAPGWRSPDPRSRLAAPPLGSTTLPSTWTAPQSRLTARPSRSPEPQIRESEQRDPQLRRKQQRWKEPLMPRREEKYPLRGTDPLPPGQPQRIPLPGQPLQPQPILTPGQPQKIPTPGQHQPILTPGHSQPIPTPGQPLPPQPIPTPGRPLTPQPIPTPGRPLTPQPIQMPGRPLRLPPPLRLLRPGQPMSPQLRQTQGLPLPQPLLPPGQPKSAGRPLQPLPPGPDARSISDPPAPRSRLPIRLLRGLLARLPGGASPRAAAAAACTTMKGWPAATMTPAETSPTMGPPDASAGFSIGEIAAAESPSATYSATFSCKPSGAASVDLRVPSPKPRALSRSRRYPWRRSADRCAKKPWRSGPRSAQRRNAVSSSTNNSRTKRWATCVRTACCF</sequence>
<reference evidence="14" key="1">
    <citation type="journal article" date="2001" name="Nature">
        <title>The DNA sequence and comparative analysis of human chromosome 20.</title>
        <authorList>
            <person name="Deloukas P."/>
            <person name="Matthews L.H."/>
            <person name="Ashurst J.L."/>
            <person name="Burton J."/>
            <person name="Gilbert J.G.R."/>
            <person name="Jones M."/>
            <person name="Stavrides G."/>
            <person name="Almeida J.P."/>
            <person name="Babbage A.K."/>
            <person name="Bagguley C.L."/>
            <person name="Bailey J."/>
            <person name="Barlow K.F."/>
            <person name="Bates K.N."/>
            <person name="Beard L.M."/>
            <person name="Beare D.M."/>
            <person name="Beasley O.P."/>
            <person name="Bird C.P."/>
            <person name="Blakey S.E."/>
            <person name="Bridgeman A.M."/>
            <person name="Brown A.J."/>
            <person name="Buck D."/>
            <person name="Burrill W.D."/>
            <person name="Butler A.P."/>
            <person name="Carder C."/>
            <person name="Carter N.P."/>
            <person name="Chapman J.C."/>
            <person name="Clamp M."/>
            <person name="Clark G."/>
            <person name="Clark L.N."/>
            <person name="Clark S.Y."/>
            <person name="Clee C.M."/>
            <person name="Clegg S."/>
            <person name="Cobley V.E."/>
            <person name="Collier R.E."/>
            <person name="Connor R.E."/>
            <person name="Corby N.R."/>
            <person name="Coulson A."/>
            <person name="Coville G.J."/>
            <person name="Deadman R."/>
            <person name="Dhami P.D."/>
            <person name="Dunn M."/>
            <person name="Ellington A.G."/>
            <person name="Frankland J.A."/>
            <person name="Fraser A."/>
            <person name="French L."/>
            <person name="Garner P."/>
            <person name="Grafham D.V."/>
            <person name="Griffiths C."/>
            <person name="Griffiths M.N.D."/>
            <person name="Gwilliam R."/>
            <person name="Hall R.E."/>
            <person name="Hammond S."/>
            <person name="Harley J.L."/>
            <person name="Heath P.D."/>
            <person name="Ho S."/>
            <person name="Holden J.L."/>
            <person name="Howden P.J."/>
            <person name="Huckle E."/>
            <person name="Hunt A.R."/>
            <person name="Hunt S.E."/>
            <person name="Jekosch K."/>
            <person name="Johnson C.M."/>
            <person name="Johnson D."/>
            <person name="Kay M.P."/>
            <person name="Kimberley A.M."/>
            <person name="King A."/>
            <person name="Knights A."/>
            <person name="Laird G.K."/>
            <person name="Lawlor S."/>
            <person name="Lehvaeslaiho M.H."/>
            <person name="Leversha M.A."/>
            <person name="Lloyd C."/>
            <person name="Lloyd D.M."/>
            <person name="Lovell J.D."/>
            <person name="Marsh V.L."/>
            <person name="Martin S.L."/>
            <person name="McConnachie L.J."/>
            <person name="McLay K."/>
            <person name="McMurray A.A."/>
            <person name="Milne S.A."/>
            <person name="Mistry D."/>
            <person name="Moore M.J.F."/>
            <person name="Mullikin J.C."/>
            <person name="Nickerson T."/>
            <person name="Oliver K."/>
            <person name="Parker A."/>
            <person name="Patel R."/>
            <person name="Pearce T.A.V."/>
            <person name="Peck A.I."/>
            <person name="Phillimore B.J.C.T."/>
            <person name="Prathalingam S.R."/>
            <person name="Plumb R.W."/>
            <person name="Ramsay H."/>
            <person name="Rice C.M."/>
            <person name="Ross M.T."/>
            <person name="Scott C.E."/>
            <person name="Sehra H.K."/>
            <person name="Shownkeen R."/>
            <person name="Sims S."/>
            <person name="Skuce C.D."/>
            <person name="Smith M.L."/>
            <person name="Soderlund C."/>
            <person name="Steward C.A."/>
            <person name="Sulston J.E."/>
            <person name="Swann R.M."/>
            <person name="Sycamore N."/>
            <person name="Taylor R."/>
            <person name="Tee L."/>
            <person name="Thomas D.W."/>
            <person name="Thorpe A."/>
            <person name="Tracey A."/>
            <person name="Tromans A.C."/>
            <person name="Vaudin M."/>
            <person name="Wall M."/>
            <person name="Wallis J.M."/>
            <person name="Whitehead S.L."/>
            <person name="Whittaker P."/>
            <person name="Willey D.L."/>
            <person name="Williams L."/>
            <person name="Williams S.A."/>
            <person name="Wilming L."/>
            <person name="Wray P.W."/>
            <person name="Hubbard T."/>
            <person name="Durbin R.M."/>
            <person name="Bentley D.R."/>
            <person name="Beck S."/>
            <person name="Rogers J."/>
        </authorList>
    </citation>
    <scope>NUCLEOTIDE SEQUENCE [LARGE SCALE GENOMIC DNA]</scope>
</reference>
<reference evidence="14" key="2">
    <citation type="journal article" date="2003" name="Hum. Mol. Genet.">
        <title>Functional polymorphisms in the paternally expressed XLalphas and its cofactor ALEX decrease their mutual interaction and enhance receptor-mediated cAMP formation.</title>
        <authorList>
            <person name="Freson K."/>
            <person name="Jaeken J."/>
            <person name="Van Helvoirt M."/>
            <person name="de Zegher F."/>
            <person name="Wittevrongel C."/>
            <person name="Thys C."/>
            <person name="Hoylaerts M.F."/>
            <person name="Vermylen J."/>
            <person name="Van Geet C."/>
        </authorList>
    </citation>
    <scope>PUTATIVE FUNCTION</scope>
    <scope>VARIANTS GNASHYP THR-374; GLN-PRO-ILE-PRO-THR-PRO-GLY-ARG-PRO-LEU-THR-PRO-375 INS AND VAL-397</scope>
</reference>
<reference evidence="14" key="3">
    <citation type="journal article" date="2004" name="Proc. Natl. Acad. Sci. U.S.A.">
        <title>XL alpha-s, the extra-long form of the alpha subunit of the Gs G protein, is significantly longer than suspected, and so is its companion Alex.</title>
        <authorList>
            <person name="Abramowitz J."/>
            <person name="Grenet D."/>
            <person name="Birnbaumer M."/>
            <person name="Torres H.N."/>
            <person name="Birnbaumer L."/>
        </authorList>
    </citation>
    <scope>IDENTIFICATION</scope>
</reference>
<reference key="4">
    <citation type="journal article" date="2000" name="J. Clin. Invest.">
        <title>A GNAS1 imprinting defect in pseudohypoparathyroidism type IB.</title>
        <authorList>
            <person name="Liu J."/>
            <person name="Litman D."/>
            <person name="Rosenberg M.J."/>
            <person name="Yu S."/>
            <person name="Biesecker L.G."/>
            <person name="Weinstein L.S."/>
        </authorList>
    </citation>
    <scope>INVOLVEMENT IN PHP1B</scope>
</reference>
<reference key="5">
    <citation type="journal article" date="2001" name="Am. J. Hum. Genet.">
        <title>Paternal uniparental isodisomy of chromosome 20q -- and the resulting changes in GNAS1 methylation -- as a plausible cause of pseudohypoparathyroidism.</title>
        <authorList>
            <person name="Bastepe M."/>
            <person name="Lane A.H."/>
            <person name="Jueppner H."/>
        </authorList>
    </citation>
    <scope>INVOLVEMENT IN PHP1B</scope>
</reference>
<reference key="6">
    <citation type="journal article" date="2001" name="J. Biol. Chem.">
        <title>Selective resistance to parathyroid hormone caused by a novel uncoupling mutation in the carboxyl terminus of G alpha(s). A cause of pseudohypoparathyroidism type Ib.</title>
        <authorList>
            <person name="Wu W.-I."/>
            <person name="Schwindinger W.F."/>
            <person name="Aparicio L.F."/>
            <person name="Levine M.A."/>
        </authorList>
    </citation>
    <scope>INVOLVEMENT IN PHP1B</scope>
</reference>
<reference key="7">
    <citation type="journal article" date="2003" name="Am. J. Hum. Genet.">
        <title>Discordance between genetic and epigenetic defects in pseudohypoparathyroidism type 1b revealed by inconsistent loss of maternal imprinting at GNAS1.</title>
        <authorList>
            <person name="Jan de Beur S."/>
            <person name="Ding C."/>
            <person name="Germain-Lee E."/>
            <person name="Cho J."/>
            <person name="Maret A."/>
            <person name="Levine M.A."/>
        </authorList>
    </citation>
    <scope>INVOLVEMENT IN PHP1B</scope>
</reference>
<reference key="8">
    <citation type="journal article" date="2003" name="J. Clin. Endocrinol. Metab.">
        <title>Cushing's syndrome secondary to adrenocorticotropin-independent macronodular adrenocortical hyperplasia due to activating mutations of GNAS1 gene.</title>
        <authorList>
            <person name="Fragoso M.C.B.V."/>
            <person name="Domenice S."/>
            <person name="Latronico A.C."/>
            <person name="Martin R.M."/>
            <person name="Pereira M.A.A."/>
            <person name="Zerbini M.C.N."/>
            <person name="Lucon A.M."/>
            <person name="Mendonca B.B."/>
        </authorList>
    </citation>
    <scope>INVOLVEMENT IN AIMAH1</scope>
</reference>
<reference key="9">
    <citation type="journal article" date="2003" name="J. Clin. Invest.">
        <title>Autosomal dominant pseudohypoparathyroidism type Ib is associated with a heterozygous microdeletion that likely disrupts a putative imprinting control element of GNAS.</title>
        <authorList>
            <person name="Bastepe M."/>
            <person name="Froehlich L.F."/>
            <person name="Hendy G.N."/>
            <person name="Indridason O.S."/>
            <person name="Josse R.G."/>
            <person name="Koshiyama H."/>
            <person name="Koerkkoe J."/>
            <person name="Nakamoto J.M."/>
            <person name="Rosenbloom A.L."/>
            <person name="Slyper A.H."/>
            <person name="Sugimoto T."/>
            <person name="Tsatsoulis A."/>
            <person name="Crawford J.D."/>
            <person name="Jueppner H."/>
        </authorList>
    </citation>
    <scope>INVOLVEMENT IN PHP1B</scope>
</reference>
<reference key="10">
    <citation type="journal article" date="2005" name="Am. J. Hum. Genet.">
        <title>A novel STX16 deletion in autosomal dominant pseudohypoparathyroidism type Ib redefines the boundaries of a cis-acting imprinting control element of GNAS.</title>
        <authorList>
            <person name="Linglart A."/>
            <person name="Gensure R.C."/>
            <person name="Olney R.C."/>
            <person name="Jueppner H."/>
            <person name="Bastepe M."/>
        </authorList>
    </citation>
    <scope>INVOLVEMENT IN PHP1B</scope>
</reference>
<reference key="11">
    <citation type="journal article" date="2005" name="Nat. Genet.">
        <title>Deletion of the NESP55 differentially methylated region causes loss of maternal GNAS imprints and pseudohypoparathyroidism type Ib.</title>
        <authorList>
            <person name="Bastepe M."/>
            <person name="Froehlich L.F."/>
            <person name="Linglart A."/>
            <person name="Abu-Zahra H.S."/>
            <person name="Tojo K."/>
            <person name="Ward L.M."/>
            <person name="Jueppner H."/>
        </authorList>
    </citation>
    <scope>INVOLVEMENT IN PHP1B</scope>
</reference>
<reference key="12">
    <citation type="journal article" date="2006" name="Science">
        <title>The consensus coding sequences of human breast and colorectal cancers.</title>
        <authorList>
            <person name="Sjoeblom T."/>
            <person name="Jones S."/>
            <person name="Wood L.D."/>
            <person name="Parsons D.W."/>
            <person name="Lin J."/>
            <person name="Barber T.D."/>
            <person name="Mandelker D."/>
            <person name="Leary R.J."/>
            <person name="Ptak J."/>
            <person name="Silliman N."/>
            <person name="Szabo S."/>
            <person name="Buckhaults P."/>
            <person name="Farrell C."/>
            <person name="Meeh P."/>
            <person name="Markowitz S.D."/>
            <person name="Willis J."/>
            <person name="Dawson D."/>
            <person name="Willson J.K.V."/>
            <person name="Gazdar A.F."/>
            <person name="Hartigan J."/>
            <person name="Wu L."/>
            <person name="Liu C."/>
            <person name="Parmigiani G."/>
            <person name="Park B.H."/>
            <person name="Bachman K.E."/>
            <person name="Papadopoulos N."/>
            <person name="Vogelstein B."/>
            <person name="Kinzler K.W."/>
            <person name="Velculescu V.E."/>
        </authorList>
    </citation>
    <scope>VARIANTS [LARGE SCALE ANALYSIS] CYS-201 AND HIS-201</scope>
</reference>
<dbReference type="EMBL" id="AL132655">
    <property type="status" value="NOT_ANNOTATED_CDS"/>
    <property type="molecule type" value="Genomic_DNA"/>
</dbReference>
<dbReference type="RefSeq" id="NP_001070958.1">
    <property type="nucleotide sequence ID" value="NM_001077490.3"/>
</dbReference>
<dbReference type="RefSeq" id="NP_001296812.1">
    <property type="nucleotide sequence ID" value="NM_001309883.1"/>
</dbReference>
<dbReference type="BioGRID" id="109040">
    <property type="interactions" value="260"/>
</dbReference>
<dbReference type="IntAct" id="P84996">
    <property type="interactions" value="9"/>
</dbReference>
<dbReference type="MINT" id="P84996"/>
<dbReference type="iPTMnet" id="P84996"/>
<dbReference type="SwissPalm" id="P84996"/>
<dbReference type="BioMuta" id="GNAS"/>
<dbReference type="DMDM" id="116242967"/>
<dbReference type="MassIVE" id="P84996"/>
<dbReference type="ProteomicsDB" id="57761"/>
<dbReference type="Antibodypedia" id="4152">
    <property type="antibodies" value="800 antibodies from 43 providers"/>
</dbReference>
<dbReference type="DNASU" id="2778"/>
<dbReference type="GeneID" id="2778"/>
<dbReference type="UCSC" id="uc061ybz.1">
    <property type="organism name" value="human"/>
</dbReference>
<dbReference type="AGR" id="HGNC:4392"/>
<dbReference type="CTD" id="2778"/>
<dbReference type="DisGeNET" id="2778"/>
<dbReference type="GeneCards" id="GNAS"/>
<dbReference type="GeneReviews" id="GNAS"/>
<dbReference type="HGNC" id="HGNC:4392">
    <property type="gene designation" value="GNAS"/>
</dbReference>
<dbReference type="MalaCards" id="GNAS"/>
<dbReference type="MIM" id="114500">
    <property type="type" value="phenotype"/>
</dbReference>
<dbReference type="MIM" id="139320">
    <property type="type" value="gene+phenotype"/>
</dbReference>
<dbReference type="MIM" id="219080">
    <property type="type" value="phenotype"/>
</dbReference>
<dbReference type="MIM" id="603233">
    <property type="type" value="phenotype"/>
</dbReference>
<dbReference type="neXtProt" id="NX_P84996"/>
<dbReference type="PharmGKB" id="PA175"/>
<dbReference type="VEuPathDB" id="HostDB:ENSG00000087460"/>
<dbReference type="HOGENOM" id="CLU_437395_0_0_1"/>
<dbReference type="OrthoDB" id="9836061at2759"/>
<dbReference type="PathwayCommons" id="P84996"/>
<dbReference type="SignaLink" id="P84996"/>
<dbReference type="BioGRID-ORCS" id="2778">
    <property type="hits" value="33 hits in 1176 CRISPR screens"/>
</dbReference>
<dbReference type="ChiTaRS" id="GNAS">
    <property type="organism name" value="human"/>
</dbReference>
<dbReference type="GenomeRNAi" id="2778"/>
<dbReference type="Pharos" id="P84996">
    <property type="development level" value="Tbio"/>
</dbReference>
<dbReference type="Proteomes" id="UP000005640">
    <property type="component" value="Chromosome 20"/>
</dbReference>
<dbReference type="Bgee" id="ENSG00000087460">
    <property type="expression patterns" value="Expressed in type B pancreatic cell and 215 other cell types or tissues"/>
</dbReference>
<dbReference type="ExpressionAtlas" id="P84996">
    <property type="expression patterns" value="baseline and differential"/>
</dbReference>
<dbReference type="GO" id="GO:0005829">
    <property type="term" value="C:cytosol"/>
    <property type="evidence" value="ECO:0000314"/>
    <property type="project" value="UniProtKB"/>
</dbReference>
<dbReference type="GO" id="GO:0016020">
    <property type="term" value="C:membrane"/>
    <property type="evidence" value="ECO:0000314"/>
    <property type="project" value="UniProtKB"/>
</dbReference>
<dbReference type="GO" id="GO:0005886">
    <property type="term" value="C:plasma membrane"/>
    <property type="evidence" value="ECO:0007669"/>
    <property type="project" value="UniProtKB-SubCell"/>
</dbReference>
<dbReference type="GO" id="GO:0001726">
    <property type="term" value="C:ruffle"/>
    <property type="evidence" value="ECO:0007669"/>
    <property type="project" value="UniProtKB-SubCell"/>
</dbReference>
<dbReference type="GO" id="GO:0007189">
    <property type="term" value="P:adenylate cyclase-activating G protein-coupled receptor signaling pathway"/>
    <property type="evidence" value="ECO:0000315"/>
    <property type="project" value="UniProtKB"/>
</dbReference>
<dbReference type="GO" id="GO:0060348">
    <property type="term" value="P:bone development"/>
    <property type="evidence" value="ECO:0000315"/>
    <property type="project" value="UniProtKB"/>
</dbReference>
<dbReference type="GO" id="GO:0050890">
    <property type="term" value="P:cognition"/>
    <property type="evidence" value="ECO:0000315"/>
    <property type="project" value="UniProtKB"/>
</dbReference>
<dbReference type="GO" id="GO:0048589">
    <property type="term" value="P:developmental growth"/>
    <property type="evidence" value="ECO:0000315"/>
    <property type="project" value="UniProtKB"/>
</dbReference>
<dbReference type="GO" id="GO:0060789">
    <property type="term" value="P:hair follicle placode formation"/>
    <property type="evidence" value="ECO:0000315"/>
    <property type="project" value="UniProtKB"/>
</dbReference>
<dbReference type="GO" id="GO:0070527">
    <property type="term" value="P:platelet aggregation"/>
    <property type="evidence" value="ECO:0000315"/>
    <property type="project" value="UniProtKB"/>
</dbReference>
<dbReference type="GO" id="GO:0120162">
    <property type="term" value="P:positive regulation of cold-induced thermogenesis"/>
    <property type="evidence" value="ECO:0000250"/>
    <property type="project" value="YuBioLab"/>
</dbReference>
<dbReference type="GO" id="GO:0009966">
    <property type="term" value="P:regulation of signal transduction"/>
    <property type="evidence" value="ECO:0000315"/>
    <property type="project" value="CACAO"/>
</dbReference>
<name>ALEX_HUMAN</name>
<gene>
    <name evidence="15" type="primary">GNAS</name>
    <name evidence="15" type="synonym">GNAS1</name>
</gene>
<comment type="function">
    <text evidence="6">May inhibit the adenylyl cyclase-stimulating activity of guanine nucleotide-binding protein G(s) subunit alpha which is produced from the same locus in a different open reading frame.</text>
</comment>
<comment type="subunit">
    <text evidence="1">Interacts with the N-terminal region of the XLas isoforms of guanine nucleotide-binding protein G(s) subunit alpha.</text>
</comment>
<comment type="subcellular location">
    <subcellularLocation>
        <location>Cell membrane</location>
        <topology>Peripheral membrane protein</topology>
    </subcellularLocation>
    <subcellularLocation>
        <location evidence="1">Cell projection</location>
        <location evidence="1">Ruffle</location>
    </subcellularLocation>
    <text evidence="1">Predominantly associated with cell membrane ruffles.</text>
</comment>
<comment type="disease" evidence="6">
    <disease id="DI-01678">
        <name>GNAS hyperfunction</name>
        <acronym>GNASHYP</acronym>
        <description>This condition is characterized by increased trauma-related bleeding tendency, prolonged bleeding time, brachydactyly and intellectual disability. Both the XLas isoforms and the ALEX protein are mutated which strongly reduces the interaction between them and this may allow unimpeded activation of the XLas isoforms.</description>
        <dbReference type="MIM" id="139320"/>
    </disease>
    <text>The disease is caused by variants affecting the gene represented in this entry.</text>
</comment>
<comment type="disease" evidence="7">
    <disease id="DI-01167">
        <name>ACTH-independent macronodular adrenal hyperplasia 1</name>
        <acronym>AIMAH1</acronym>
        <description>A rare adrenal defect characterized by multiple, bilateral, non-pigmented, benign, adrenocortical nodules. It results in excessive production of cortisol leading to ACTH-independent Cushing syndrome. Clinical manifestations of Cushing syndrome include facial and truncal obesity, abdominal striae, muscular weakness, osteoporosis, arterial hypertension, diabetes.</description>
        <dbReference type="MIM" id="219080"/>
    </disease>
    <text>The disease is caused by variants affecting the gene represented in this entry.</text>
</comment>
<comment type="disease" evidence="3 4 5 8 9 11 12">
    <disease id="DI-02817">
        <name>Pseudohypoparathyroidism 1B</name>
        <acronym>PHP1B</acronym>
        <description>A disorder characterized by end-organ resistance to parathyroid hormone, hypocalcemia and hyperphosphatemia. Patients affected with PHP1B lack developmental defects characteristic of Albright hereditary osteodystrophy, and typically show no other endocrine abnormalities besides resistance to PTH.</description>
        <dbReference type="MIM" id="603233"/>
    </disease>
    <text>The disease is caused by variants affecting the gene represented in this entry. Most affected individuals have defects in methylation of the gene. In some cases microdeletions involving the STX16 appear to cause loss of methylation at exon A/B of GNAS, resulting in PHP1B. Paternal uniparental isodisomy have also been observed.</text>
</comment>
<comment type="disease">
    <disease id="DI-01359">
        <name>Colorectal cancer</name>
        <acronym>CRC</acronym>
        <description>A complex disease characterized by malignant lesions arising from the inner wall of the large intestine (the colon) and the rectum. Genetic alterations are often associated with progression from premalignant lesion (adenoma) to invasive adenocarcinoma. Risk factors for cancer of the colon and rectum include colon polyps, long-standing ulcerative colitis, and genetic family history.</description>
        <dbReference type="MIM" id="114500"/>
    </disease>
    <text>The disease may be caused by variants affecting the gene represented in this entry.</text>
</comment>
<comment type="miscellaneous">
    <text evidence="10">This protein is produced by a bicistronic gene which also produces guanine nucleotide-binding protein G(s) subunit alpha from an overlapping reading frame.</text>
</comment>
<comment type="similarity">
    <text evidence="14">Belongs to the ALEX family.</text>
</comment>
<evidence type="ECO:0000250" key="1"/>
<evidence type="ECO:0000256" key="2">
    <source>
        <dbReference type="SAM" id="MobiDB-lite"/>
    </source>
</evidence>
<evidence type="ECO:0000269" key="3">
    <source>
    </source>
</evidence>
<evidence type="ECO:0000269" key="4">
    <source>
    </source>
</evidence>
<evidence type="ECO:0000269" key="5">
    <source>
    </source>
</evidence>
<evidence type="ECO:0000269" key="6">
    <source>
    </source>
</evidence>
<evidence type="ECO:0000269" key="7">
    <source>
    </source>
</evidence>
<evidence type="ECO:0000269" key="8">
    <source>
    </source>
</evidence>
<evidence type="ECO:0000269" key="9">
    <source>
    </source>
</evidence>
<evidence type="ECO:0000269" key="10">
    <source>
    </source>
</evidence>
<evidence type="ECO:0000269" key="11">
    <source>
    </source>
</evidence>
<evidence type="ECO:0000269" key="12">
    <source>
    </source>
</evidence>
<evidence type="ECO:0000269" key="13">
    <source>
    </source>
</evidence>
<evidence type="ECO:0000305" key="14"/>
<evidence type="ECO:0000312" key="15">
    <source>
        <dbReference type="HGNC" id="HGNC:4392"/>
    </source>
</evidence>
<protein>
    <recommendedName>
        <fullName>Protein ALEX</fullName>
    </recommendedName>
    <alternativeName>
        <fullName>Alternative gene product encoded by XL-exon</fullName>
    </alternativeName>
</protein>
<feature type="chain" id="PRO_0000253964" description="Protein ALEX">
    <location>
        <begin position="1"/>
        <end position="626"/>
    </location>
</feature>
<feature type="region of interest" description="Disordered" evidence="2">
    <location>
        <begin position="1"/>
        <end position="29"/>
    </location>
</feature>
<feature type="region of interest" description="Disordered" evidence="2">
    <location>
        <begin position="173"/>
        <end position="223"/>
    </location>
</feature>
<feature type="region of interest" description="Disordered" evidence="2">
    <location>
        <begin position="236"/>
        <end position="473"/>
    </location>
</feature>
<feature type="region of interest" description="Disordered" evidence="2">
    <location>
        <begin position="556"/>
        <end position="612"/>
    </location>
</feature>
<feature type="compositionally biased region" description="Polar residues" evidence="2">
    <location>
        <begin position="186"/>
        <end position="195"/>
    </location>
</feature>
<feature type="compositionally biased region" description="Polar residues" evidence="2">
    <location>
        <begin position="255"/>
        <end position="270"/>
    </location>
</feature>
<feature type="compositionally biased region" description="Basic and acidic residues" evidence="2">
    <location>
        <begin position="281"/>
        <end position="312"/>
    </location>
</feature>
<feature type="compositionally biased region" description="Low complexity" evidence="2">
    <location>
        <begin position="337"/>
        <end position="346"/>
    </location>
</feature>
<feature type="compositionally biased region" description="Pro residues" evidence="2">
    <location>
        <begin position="366"/>
        <end position="399"/>
    </location>
</feature>
<feature type="compositionally biased region" description="Low complexity" evidence="2">
    <location>
        <begin position="416"/>
        <end position="435"/>
    </location>
</feature>
<feature type="compositionally biased region" description="Pro residues" evidence="2">
    <location>
        <begin position="436"/>
        <end position="445"/>
    </location>
</feature>
<feature type="compositionally biased region" description="Basic residues" evidence="2">
    <location>
        <begin position="570"/>
        <end position="579"/>
    </location>
</feature>
<feature type="compositionally biased region" description="Polar residues" evidence="2">
    <location>
        <begin position="600"/>
        <end position="611"/>
    </location>
</feature>
<feature type="sequence variant" id="VAR_035788" description="In a colorectal cancer sample; somatic mutation." evidence="13">
    <original>R</original>
    <variation>C</variation>
    <location>
        <position position="201"/>
    </location>
</feature>
<feature type="sequence variant" id="VAR_035789" description="In a colorectal cancer sample; somatic mutation." evidence="13">
    <original>R</original>
    <variation>H</variation>
    <location>
        <position position="201"/>
    </location>
</feature>
<feature type="sequence variant" id="VAR_028774" description="In GNASHYP; dbSNP:rs1376506169." evidence="6">
    <original>P</original>
    <variation>T</variation>
    <location>
        <position position="374"/>
    </location>
</feature>
<feature type="sequence variant" id="VAR_028775" description="In GNASHYP.">
    <original>P</original>
    <variation>PQPIPTPGRPLTP</variation>
    <location>
        <position position="375"/>
    </location>
</feature>
<feature type="sequence variant" id="VAR_028776" description="In GNASHYP." evidence="6">
    <original>L</original>
    <variation>V</variation>
    <location>
        <position position="397"/>
    </location>
</feature>